<organism>
    <name type="scientific">Gorilla gorilla gorilla</name>
    <name type="common">Western lowland gorilla</name>
    <dbReference type="NCBI Taxonomy" id="9595"/>
    <lineage>
        <taxon>Eukaryota</taxon>
        <taxon>Metazoa</taxon>
        <taxon>Chordata</taxon>
        <taxon>Craniata</taxon>
        <taxon>Vertebrata</taxon>
        <taxon>Euteleostomi</taxon>
        <taxon>Mammalia</taxon>
        <taxon>Eutheria</taxon>
        <taxon>Euarchontoglires</taxon>
        <taxon>Primates</taxon>
        <taxon>Haplorrhini</taxon>
        <taxon>Catarrhini</taxon>
        <taxon>Hominidae</taxon>
        <taxon>Gorilla</taxon>
    </lineage>
</organism>
<dbReference type="EMBL" id="AM410167">
    <property type="protein sequence ID" value="CAL68977.1"/>
    <property type="molecule type" value="Genomic_DNA"/>
</dbReference>
<dbReference type="RefSeq" id="XP_004061675.4">
    <property type="nucleotide sequence ID" value="XM_004061627.5"/>
</dbReference>
<dbReference type="FunCoup" id="A4H262">
    <property type="interactions" value="1"/>
</dbReference>
<dbReference type="STRING" id="9593.ENSGGOP00000006458"/>
<dbReference type="Ensembl" id="ENSGGOT00000006629.3">
    <property type="protein sequence ID" value="ENSGGOP00000006458.3"/>
    <property type="gene ID" value="ENSGGOG00000006603.3"/>
</dbReference>
<dbReference type="GeneID" id="101143601"/>
<dbReference type="KEGG" id="ggo:101143601"/>
<dbReference type="CTD" id="400830"/>
<dbReference type="eggNOG" id="ENOG502TE15">
    <property type="taxonomic scope" value="Eukaryota"/>
</dbReference>
<dbReference type="GeneTree" id="ENSGT00940000165094"/>
<dbReference type="InParanoid" id="A4H262"/>
<dbReference type="OMA" id="NASRKCC"/>
<dbReference type="Proteomes" id="UP000001519">
    <property type="component" value="Chromosome 20"/>
</dbReference>
<dbReference type="GO" id="GO:0005615">
    <property type="term" value="C:extracellular space"/>
    <property type="evidence" value="ECO:0007669"/>
    <property type="project" value="Ensembl"/>
</dbReference>
<dbReference type="GO" id="GO:0061827">
    <property type="term" value="C:sperm head"/>
    <property type="evidence" value="ECO:0007669"/>
    <property type="project" value="Ensembl"/>
</dbReference>
<dbReference type="GO" id="GO:0042742">
    <property type="term" value="P:defense response to bacterium"/>
    <property type="evidence" value="ECO:0007669"/>
    <property type="project" value="UniProtKB-KW"/>
</dbReference>
<dbReference type="GO" id="GO:0045087">
    <property type="term" value="P:innate immune response"/>
    <property type="evidence" value="ECO:0007669"/>
    <property type="project" value="InterPro"/>
</dbReference>
<dbReference type="GO" id="GO:0031640">
    <property type="term" value="P:killing of cells of another organism"/>
    <property type="evidence" value="ECO:0007669"/>
    <property type="project" value="Ensembl"/>
</dbReference>
<dbReference type="InterPro" id="IPR025933">
    <property type="entry name" value="Beta_defensin_dom"/>
</dbReference>
<dbReference type="Pfam" id="PF13841">
    <property type="entry name" value="Defensin_beta_2"/>
    <property type="match status" value="1"/>
</dbReference>
<accession>A4H262</accession>
<sequence length="94" mass="10572">MKFLLLVLAALGFLTQVIPASAGGSKCVSNTPAYCRTYCHWGETALFMFNASRKCCISYSFLPKPDLPQLIGNHWQSRRNTQRKDKKQQTTVTS</sequence>
<proteinExistence type="inferred from homology"/>
<reference key="1">
    <citation type="submission" date="2006-11" db="EMBL/GenBank/DDBJ databases">
        <title>Evolution and sequence variation of human beta-defensin genes.</title>
        <authorList>
            <person name="Hollox E.J."/>
            <person name="Armour J.A.L."/>
        </authorList>
    </citation>
    <scope>NUCLEOTIDE SEQUENCE [GENOMIC DNA]</scope>
</reference>
<name>DB132_GORGO</name>
<evidence type="ECO:0000250" key="1"/>
<evidence type="ECO:0000255" key="2"/>
<evidence type="ECO:0000256" key="3">
    <source>
        <dbReference type="SAM" id="MobiDB-lite"/>
    </source>
</evidence>
<evidence type="ECO:0000305" key="4"/>
<keyword id="KW-0044">Antibiotic</keyword>
<keyword id="KW-0929">Antimicrobial</keyword>
<keyword id="KW-0211">Defensin</keyword>
<keyword id="KW-1015">Disulfide bond</keyword>
<keyword id="KW-1185">Reference proteome</keyword>
<keyword id="KW-0964">Secreted</keyword>
<keyword id="KW-0732">Signal</keyword>
<feature type="signal peptide" evidence="2">
    <location>
        <begin position="1"/>
        <end position="22"/>
    </location>
</feature>
<feature type="chain" id="PRO_0000289858" description="Beta-defensin 132">
    <location>
        <begin position="23"/>
        <end position="94"/>
    </location>
</feature>
<feature type="region of interest" description="Disordered" evidence="3">
    <location>
        <begin position="72"/>
        <end position="94"/>
    </location>
</feature>
<feature type="compositionally biased region" description="Basic residues" evidence="3">
    <location>
        <begin position="76"/>
        <end position="86"/>
    </location>
</feature>
<feature type="disulfide bond" evidence="1">
    <location>
        <begin position="27"/>
        <end position="55"/>
    </location>
</feature>
<feature type="disulfide bond" evidence="1">
    <location>
        <begin position="39"/>
        <end position="56"/>
    </location>
</feature>
<gene>
    <name type="primary">DEFB132</name>
</gene>
<comment type="function">
    <text evidence="4">Has antibacterial activity.</text>
</comment>
<comment type="subcellular location">
    <subcellularLocation>
        <location evidence="4">Secreted</location>
    </subcellularLocation>
</comment>
<comment type="similarity">
    <text evidence="4">Belongs to the beta-defensin family.</text>
</comment>
<protein>
    <recommendedName>
        <fullName>Beta-defensin 132</fullName>
    </recommendedName>
    <alternativeName>
        <fullName>Defensin, beta 132</fullName>
    </alternativeName>
</protein>